<evidence type="ECO:0000255" key="1">
    <source>
        <dbReference type="HAMAP-Rule" id="MF_01310"/>
    </source>
</evidence>
<evidence type="ECO:0000256" key="2">
    <source>
        <dbReference type="SAM" id="MobiDB-lite"/>
    </source>
</evidence>
<evidence type="ECO:0000305" key="3"/>
<reference key="1">
    <citation type="submission" date="2007-06" db="EMBL/GenBank/DDBJ databases">
        <title>Complete sequence of Clostridium beijerinckii NCIMB 8052.</title>
        <authorList>
            <consortium name="US DOE Joint Genome Institute"/>
            <person name="Copeland A."/>
            <person name="Lucas S."/>
            <person name="Lapidus A."/>
            <person name="Barry K."/>
            <person name="Detter J.C."/>
            <person name="Glavina del Rio T."/>
            <person name="Hammon N."/>
            <person name="Israni S."/>
            <person name="Dalin E."/>
            <person name="Tice H."/>
            <person name="Pitluck S."/>
            <person name="Sims D."/>
            <person name="Brettin T."/>
            <person name="Bruce D."/>
            <person name="Tapia R."/>
            <person name="Brainard J."/>
            <person name="Schmutz J."/>
            <person name="Larimer F."/>
            <person name="Land M."/>
            <person name="Hauser L."/>
            <person name="Kyrpides N."/>
            <person name="Mikhailova N."/>
            <person name="Bennet G."/>
            <person name="Cann I."/>
            <person name="Chen J.-S."/>
            <person name="Contreras A.L."/>
            <person name="Jones D."/>
            <person name="Kashket E."/>
            <person name="Mitchell W."/>
            <person name="Stoddard S."/>
            <person name="Schwarz W."/>
            <person name="Qureshi N."/>
            <person name="Young M."/>
            <person name="Shi Z."/>
            <person name="Ezeji T."/>
            <person name="White B."/>
            <person name="Blaschek H."/>
            <person name="Richardson P."/>
        </authorList>
    </citation>
    <scope>NUCLEOTIDE SEQUENCE [LARGE SCALE GENOMIC DNA]</scope>
    <source>
        <strain>ATCC 51743 / NCIMB 8052</strain>
    </source>
</reference>
<accession>A6LPT8</accession>
<organism>
    <name type="scientific">Clostridium beijerinckii (strain ATCC 51743 / NCIMB 8052)</name>
    <name type="common">Clostridium acetobutylicum</name>
    <dbReference type="NCBI Taxonomy" id="290402"/>
    <lineage>
        <taxon>Bacteria</taxon>
        <taxon>Bacillati</taxon>
        <taxon>Bacillota</taxon>
        <taxon>Clostridia</taxon>
        <taxon>Eubacteriales</taxon>
        <taxon>Clostridiaceae</taxon>
        <taxon>Clostridium</taxon>
    </lineage>
</organism>
<comment type="function">
    <text evidence="1">Located on the platform of the 30S subunit, it bridges several disparate RNA helices of the 16S rRNA. Forms part of the Shine-Dalgarno cleft in the 70S ribosome.</text>
</comment>
<comment type="subunit">
    <text evidence="1">Part of the 30S ribosomal subunit. Interacts with proteins S7 and S18. Binds to IF-3.</text>
</comment>
<comment type="similarity">
    <text evidence="1">Belongs to the universal ribosomal protein uS11 family.</text>
</comment>
<gene>
    <name evidence="1" type="primary">rpsK</name>
    <name type="ordered locus">Cbei_0178</name>
</gene>
<dbReference type="EMBL" id="CP000721">
    <property type="protein sequence ID" value="ABR32368.1"/>
    <property type="molecule type" value="Genomic_DNA"/>
</dbReference>
<dbReference type="RefSeq" id="WP_011967531.1">
    <property type="nucleotide sequence ID" value="NC_009617.1"/>
</dbReference>
<dbReference type="SMR" id="A6LPT8"/>
<dbReference type="GeneID" id="66343068"/>
<dbReference type="KEGG" id="cbe:Cbei_0178"/>
<dbReference type="eggNOG" id="COG0100">
    <property type="taxonomic scope" value="Bacteria"/>
</dbReference>
<dbReference type="HOGENOM" id="CLU_072439_5_0_9"/>
<dbReference type="Proteomes" id="UP000000565">
    <property type="component" value="Chromosome"/>
</dbReference>
<dbReference type="GO" id="GO:1990904">
    <property type="term" value="C:ribonucleoprotein complex"/>
    <property type="evidence" value="ECO:0007669"/>
    <property type="project" value="UniProtKB-KW"/>
</dbReference>
<dbReference type="GO" id="GO:0005840">
    <property type="term" value="C:ribosome"/>
    <property type="evidence" value="ECO:0007669"/>
    <property type="project" value="UniProtKB-KW"/>
</dbReference>
<dbReference type="GO" id="GO:0019843">
    <property type="term" value="F:rRNA binding"/>
    <property type="evidence" value="ECO:0007669"/>
    <property type="project" value="UniProtKB-UniRule"/>
</dbReference>
<dbReference type="GO" id="GO:0003735">
    <property type="term" value="F:structural constituent of ribosome"/>
    <property type="evidence" value="ECO:0007669"/>
    <property type="project" value="InterPro"/>
</dbReference>
<dbReference type="GO" id="GO:0006412">
    <property type="term" value="P:translation"/>
    <property type="evidence" value="ECO:0007669"/>
    <property type="project" value="UniProtKB-UniRule"/>
</dbReference>
<dbReference type="FunFam" id="3.30.420.80:FF:000001">
    <property type="entry name" value="30S ribosomal protein S11"/>
    <property type="match status" value="1"/>
</dbReference>
<dbReference type="Gene3D" id="3.30.420.80">
    <property type="entry name" value="Ribosomal protein S11"/>
    <property type="match status" value="1"/>
</dbReference>
<dbReference type="HAMAP" id="MF_01310">
    <property type="entry name" value="Ribosomal_uS11"/>
    <property type="match status" value="1"/>
</dbReference>
<dbReference type="InterPro" id="IPR001971">
    <property type="entry name" value="Ribosomal_uS11"/>
</dbReference>
<dbReference type="InterPro" id="IPR019981">
    <property type="entry name" value="Ribosomal_uS11_bac-type"/>
</dbReference>
<dbReference type="InterPro" id="IPR018102">
    <property type="entry name" value="Ribosomal_uS11_CS"/>
</dbReference>
<dbReference type="InterPro" id="IPR036967">
    <property type="entry name" value="Ribosomal_uS11_sf"/>
</dbReference>
<dbReference type="NCBIfam" id="NF003698">
    <property type="entry name" value="PRK05309.1"/>
    <property type="match status" value="1"/>
</dbReference>
<dbReference type="NCBIfam" id="TIGR03632">
    <property type="entry name" value="uS11_bact"/>
    <property type="match status" value="1"/>
</dbReference>
<dbReference type="PANTHER" id="PTHR11759">
    <property type="entry name" value="40S RIBOSOMAL PROTEIN S14/30S RIBOSOMAL PROTEIN S11"/>
    <property type="match status" value="1"/>
</dbReference>
<dbReference type="Pfam" id="PF00411">
    <property type="entry name" value="Ribosomal_S11"/>
    <property type="match status" value="1"/>
</dbReference>
<dbReference type="PIRSF" id="PIRSF002131">
    <property type="entry name" value="Ribosomal_S11"/>
    <property type="match status" value="1"/>
</dbReference>
<dbReference type="SUPFAM" id="SSF53137">
    <property type="entry name" value="Translational machinery components"/>
    <property type="match status" value="1"/>
</dbReference>
<dbReference type="PROSITE" id="PS00054">
    <property type="entry name" value="RIBOSOMAL_S11"/>
    <property type="match status" value="1"/>
</dbReference>
<keyword id="KW-0687">Ribonucleoprotein</keyword>
<keyword id="KW-0689">Ribosomal protein</keyword>
<keyword id="KW-0694">RNA-binding</keyword>
<keyword id="KW-0699">rRNA-binding</keyword>
<protein>
    <recommendedName>
        <fullName evidence="1">Small ribosomal subunit protein uS11</fullName>
    </recommendedName>
    <alternativeName>
        <fullName evidence="3">30S ribosomal protein S11</fullName>
    </alternativeName>
</protein>
<feature type="chain" id="PRO_1000086183" description="Small ribosomal subunit protein uS11">
    <location>
        <begin position="1"/>
        <end position="131"/>
    </location>
</feature>
<feature type="region of interest" description="Disordered" evidence="2">
    <location>
        <begin position="1"/>
        <end position="23"/>
    </location>
</feature>
<feature type="compositionally biased region" description="Basic residues" evidence="2">
    <location>
        <begin position="1"/>
        <end position="15"/>
    </location>
</feature>
<sequence length="131" mass="14031">MAAKTVKKTRRRKERKNVEHGAAHIKSTFNNSIVTLTDAVGNALSWSSAGALGFRGSRKSTPFAAQMAAETAAKVAMEHGLKSIEVYVKGPGSGREAAIRSLQAAGLEVTLIKDVTPIPHNGCRPPKRRRV</sequence>
<name>RS11_CLOB8</name>
<proteinExistence type="inferred from homology"/>